<keyword id="KW-0472">Membrane</keyword>
<keyword id="KW-1185">Reference proteome</keyword>
<keyword id="KW-0762">Sugar transport</keyword>
<keyword id="KW-0812">Transmembrane</keyword>
<keyword id="KW-1133">Transmembrane helix</keyword>
<keyword id="KW-0813">Transport</keyword>
<sequence>MHKMMVVEKERSIEERLLQLKNQNDDSECRITACVILSTFIAVCGSFSFGVSLGYTSGAEIGIMKDLDLSIAQFSAFASLSTLGAAIGALFSGKMAIILGRRKTMWVSDLLCIIGWFSIAFAKDVMWLNFGRISSGIGLGLISYVVPVYIAEISPKHVRGTFTFTNQLLQNSGLAMVYFSGNFLNWRILALLGALPCFIQVIGLFFVPESPRWLAKVGSDKELENSLLRLRGGNADISREASDIEVMTKMVENDSKSSFCDLFQRKYRYTLVVGIGLMLIQQFSGSSAVLSYASTILRKAGFSVTIGSTLLGLFMIPKAMIGVILVDKWGRRPLLLTSVSGMCITSMLIGVAFTLQKMQLLPELTPVFTFICVTLYIGTYAIGLGGLPWVIMSEIFPMNIKVTAGSIVTLVSWSSSSIVTYAFNFLLEWSTQGTFYVFGAVGGLALLFIWLLVPETKGLSLEEIQASLIREPDRINQS</sequence>
<name>EDL18_ARATH</name>
<proteinExistence type="evidence at transcript level"/>
<evidence type="ECO:0000250" key="1"/>
<evidence type="ECO:0000255" key="2"/>
<evidence type="ECO:0000269" key="3">
    <source>
    </source>
</evidence>
<evidence type="ECO:0000305" key="4"/>
<dbReference type="EMBL" id="AY026255">
    <property type="protein sequence ID" value="AAK11721.1"/>
    <property type="molecule type" value="mRNA"/>
</dbReference>
<dbReference type="EMBL" id="AC007123">
    <property type="status" value="NOT_ANNOTATED_CDS"/>
    <property type="molecule type" value="Genomic_DNA"/>
</dbReference>
<dbReference type="EMBL" id="CP002688">
    <property type="protein sequence ID" value="AED93676.1"/>
    <property type="molecule type" value="Genomic_DNA"/>
</dbReference>
<dbReference type="RefSeq" id="NP_568494.1">
    <property type="nucleotide sequence ID" value="NM_122618.3"/>
</dbReference>
<dbReference type="SMR" id="Q94CI6"/>
<dbReference type="FunCoup" id="Q94CI6">
    <property type="interactions" value="632"/>
</dbReference>
<dbReference type="STRING" id="3702.Q94CI6"/>
<dbReference type="PaxDb" id="3702-AT5G27360.1"/>
<dbReference type="ProteomicsDB" id="222063"/>
<dbReference type="EnsemblPlants" id="AT5G27360.1">
    <property type="protein sequence ID" value="AT5G27360.1"/>
    <property type="gene ID" value="AT5G27360"/>
</dbReference>
<dbReference type="GeneID" id="832795"/>
<dbReference type="Gramene" id="AT5G27360.1">
    <property type="protein sequence ID" value="AT5G27360.1"/>
    <property type="gene ID" value="AT5G27360"/>
</dbReference>
<dbReference type="KEGG" id="ath:AT5G27360"/>
<dbReference type="Araport" id="AT5G27360"/>
<dbReference type="TAIR" id="AT5G27360">
    <property type="gene designation" value="SFP2"/>
</dbReference>
<dbReference type="eggNOG" id="KOG0254">
    <property type="taxonomic scope" value="Eukaryota"/>
</dbReference>
<dbReference type="HOGENOM" id="CLU_001265_30_5_1"/>
<dbReference type="InParanoid" id="Q94CI6"/>
<dbReference type="OMA" id="ATINILC"/>
<dbReference type="PhylomeDB" id="Q94CI6"/>
<dbReference type="PRO" id="PR:Q94CI6"/>
<dbReference type="Proteomes" id="UP000006548">
    <property type="component" value="Chromosome 5"/>
</dbReference>
<dbReference type="ExpressionAtlas" id="Q94CI6">
    <property type="expression patterns" value="baseline and differential"/>
</dbReference>
<dbReference type="GO" id="GO:0016020">
    <property type="term" value="C:membrane"/>
    <property type="evidence" value="ECO:0007669"/>
    <property type="project" value="UniProtKB-SubCell"/>
</dbReference>
<dbReference type="GO" id="GO:0051119">
    <property type="term" value="F:sugar transmembrane transporter activity"/>
    <property type="evidence" value="ECO:0007669"/>
    <property type="project" value="InterPro"/>
</dbReference>
<dbReference type="CDD" id="cd17358">
    <property type="entry name" value="MFS_GLUT6_8_Class3_like"/>
    <property type="match status" value="1"/>
</dbReference>
<dbReference type="FunFam" id="1.20.1250.20:FF:000043">
    <property type="entry name" value="sugar transporter ERD6-like 6"/>
    <property type="match status" value="1"/>
</dbReference>
<dbReference type="Gene3D" id="1.20.1250.20">
    <property type="entry name" value="MFS general substrate transporter like domains"/>
    <property type="match status" value="1"/>
</dbReference>
<dbReference type="InterPro" id="IPR020846">
    <property type="entry name" value="MFS_dom"/>
</dbReference>
<dbReference type="InterPro" id="IPR044775">
    <property type="entry name" value="MFS_ERD6/Tret1-like"/>
</dbReference>
<dbReference type="InterPro" id="IPR005828">
    <property type="entry name" value="MFS_sugar_transport-like"/>
</dbReference>
<dbReference type="InterPro" id="IPR036259">
    <property type="entry name" value="MFS_trans_sf"/>
</dbReference>
<dbReference type="InterPro" id="IPR050549">
    <property type="entry name" value="MFS_Trehalose_Transporter"/>
</dbReference>
<dbReference type="InterPro" id="IPR003663">
    <property type="entry name" value="Sugar/inositol_transpt"/>
</dbReference>
<dbReference type="InterPro" id="IPR005829">
    <property type="entry name" value="Sugar_transporter_CS"/>
</dbReference>
<dbReference type="NCBIfam" id="TIGR00879">
    <property type="entry name" value="SP"/>
    <property type="match status" value="1"/>
</dbReference>
<dbReference type="PANTHER" id="PTHR48021">
    <property type="match status" value="1"/>
</dbReference>
<dbReference type="PANTHER" id="PTHR48021:SF61">
    <property type="entry name" value="SUGAR TRANSPORTER ERD6-LIKE 17-RELATED"/>
    <property type="match status" value="1"/>
</dbReference>
<dbReference type="Pfam" id="PF00083">
    <property type="entry name" value="Sugar_tr"/>
    <property type="match status" value="1"/>
</dbReference>
<dbReference type="PRINTS" id="PR00171">
    <property type="entry name" value="SUGRTRNSPORT"/>
</dbReference>
<dbReference type="SUPFAM" id="SSF103473">
    <property type="entry name" value="MFS general substrate transporter"/>
    <property type="match status" value="1"/>
</dbReference>
<dbReference type="PROSITE" id="PS50850">
    <property type="entry name" value="MFS"/>
    <property type="match status" value="1"/>
</dbReference>
<dbReference type="PROSITE" id="PS00216">
    <property type="entry name" value="SUGAR_TRANSPORT_1"/>
    <property type="match status" value="1"/>
</dbReference>
<reference key="1">
    <citation type="journal article" date="2001" name="Plant Mol. Biol.">
        <title>One of two tandem Arabidopsis genes homologous to monosaccharide transporters is senescence-associated.</title>
        <authorList>
            <person name="Quirino B.F."/>
            <person name="Reiter W.-D."/>
            <person name="Amasino R.M."/>
        </authorList>
    </citation>
    <scope>NUCLEOTIDE SEQUENCE [MRNA]</scope>
    <scope>TISSUE SPECIFICITY</scope>
    <source>
        <strain>cv. Landsberg erecta</strain>
    </source>
</reference>
<reference key="2">
    <citation type="journal article" date="2000" name="Nature">
        <title>Sequence and analysis of chromosome 5 of the plant Arabidopsis thaliana.</title>
        <authorList>
            <person name="Tabata S."/>
            <person name="Kaneko T."/>
            <person name="Nakamura Y."/>
            <person name="Kotani H."/>
            <person name="Kato T."/>
            <person name="Asamizu E."/>
            <person name="Miyajima N."/>
            <person name="Sasamoto S."/>
            <person name="Kimura T."/>
            <person name="Hosouchi T."/>
            <person name="Kawashima K."/>
            <person name="Kohara M."/>
            <person name="Matsumoto M."/>
            <person name="Matsuno A."/>
            <person name="Muraki A."/>
            <person name="Nakayama S."/>
            <person name="Nakazaki N."/>
            <person name="Naruo K."/>
            <person name="Okumura S."/>
            <person name="Shinpo S."/>
            <person name="Takeuchi C."/>
            <person name="Wada T."/>
            <person name="Watanabe A."/>
            <person name="Yamada M."/>
            <person name="Yasuda M."/>
            <person name="Sato S."/>
            <person name="de la Bastide M."/>
            <person name="Huang E."/>
            <person name="Spiegel L."/>
            <person name="Gnoj L."/>
            <person name="O'Shaughnessy A."/>
            <person name="Preston R."/>
            <person name="Habermann K."/>
            <person name="Murray J."/>
            <person name="Johnson D."/>
            <person name="Rohlfing T."/>
            <person name="Nelson J."/>
            <person name="Stoneking T."/>
            <person name="Pepin K."/>
            <person name="Spieth J."/>
            <person name="Sekhon M."/>
            <person name="Armstrong J."/>
            <person name="Becker M."/>
            <person name="Belter E."/>
            <person name="Cordum H."/>
            <person name="Cordes M."/>
            <person name="Courtney L."/>
            <person name="Courtney W."/>
            <person name="Dante M."/>
            <person name="Du H."/>
            <person name="Edwards J."/>
            <person name="Fryman J."/>
            <person name="Haakensen B."/>
            <person name="Lamar E."/>
            <person name="Latreille P."/>
            <person name="Leonard S."/>
            <person name="Meyer R."/>
            <person name="Mulvaney E."/>
            <person name="Ozersky P."/>
            <person name="Riley A."/>
            <person name="Strowmatt C."/>
            <person name="Wagner-McPherson C."/>
            <person name="Wollam A."/>
            <person name="Yoakum M."/>
            <person name="Bell M."/>
            <person name="Dedhia N."/>
            <person name="Parnell L."/>
            <person name="Shah R."/>
            <person name="Rodriguez M."/>
            <person name="Hoon See L."/>
            <person name="Vil D."/>
            <person name="Baker J."/>
            <person name="Kirchoff K."/>
            <person name="Toth K."/>
            <person name="King L."/>
            <person name="Bahret A."/>
            <person name="Miller B."/>
            <person name="Marra M.A."/>
            <person name="Martienssen R."/>
            <person name="McCombie W.R."/>
            <person name="Wilson R.K."/>
            <person name="Murphy G."/>
            <person name="Bancroft I."/>
            <person name="Volckaert G."/>
            <person name="Wambutt R."/>
            <person name="Duesterhoeft A."/>
            <person name="Stiekema W."/>
            <person name="Pohl T."/>
            <person name="Entian K.-D."/>
            <person name="Terryn N."/>
            <person name="Hartley N."/>
            <person name="Bent E."/>
            <person name="Johnson S."/>
            <person name="Langham S.-A."/>
            <person name="McCullagh B."/>
            <person name="Robben J."/>
            <person name="Grymonprez B."/>
            <person name="Zimmermann W."/>
            <person name="Ramsperger U."/>
            <person name="Wedler H."/>
            <person name="Balke K."/>
            <person name="Wedler E."/>
            <person name="Peters S."/>
            <person name="van Staveren M."/>
            <person name="Dirkse W."/>
            <person name="Mooijman P."/>
            <person name="Klein Lankhorst R."/>
            <person name="Weitzenegger T."/>
            <person name="Bothe G."/>
            <person name="Rose M."/>
            <person name="Hauf J."/>
            <person name="Berneiser S."/>
            <person name="Hempel S."/>
            <person name="Feldpausch M."/>
            <person name="Lamberth S."/>
            <person name="Villarroel R."/>
            <person name="Gielen J."/>
            <person name="Ardiles W."/>
            <person name="Bents O."/>
            <person name="Lemcke K."/>
            <person name="Kolesov G."/>
            <person name="Mayer K.F.X."/>
            <person name="Rudd S."/>
            <person name="Schoof H."/>
            <person name="Schueller C."/>
            <person name="Zaccaria P."/>
            <person name="Mewes H.-W."/>
            <person name="Bevan M."/>
            <person name="Fransz P.F."/>
        </authorList>
    </citation>
    <scope>NUCLEOTIDE SEQUENCE [LARGE SCALE GENOMIC DNA]</scope>
    <source>
        <strain>cv. Columbia</strain>
    </source>
</reference>
<reference key="3">
    <citation type="journal article" date="2017" name="Plant J.">
        <title>Araport11: a complete reannotation of the Arabidopsis thaliana reference genome.</title>
        <authorList>
            <person name="Cheng C.Y."/>
            <person name="Krishnakumar V."/>
            <person name="Chan A.P."/>
            <person name="Thibaud-Nissen F."/>
            <person name="Schobel S."/>
            <person name="Town C.D."/>
        </authorList>
    </citation>
    <scope>GENOME REANNOTATION</scope>
    <source>
        <strain>cv. Columbia</strain>
    </source>
</reference>
<reference key="4">
    <citation type="journal article" date="2006" name="BMC Evol. Biol.">
        <title>The monosaccharide transporter gene family in land plants is ancient and shows differential subfamily expression and expansion across lineages.</title>
        <authorList>
            <person name="Johnson D.A."/>
            <person name="Hill J.P."/>
            <person name="Thomas M.A."/>
        </authorList>
    </citation>
    <scope>GENE FAMILY</scope>
</reference>
<comment type="function">
    <text evidence="4">Sugar transporter.</text>
</comment>
<comment type="subcellular location">
    <subcellularLocation>
        <location evidence="1">Membrane</location>
        <topology evidence="1">Multi-pass membrane protein</topology>
    </subcellularLocation>
</comment>
<comment type="tissue specificity">
    <text evidence="3">Expressed in leaf vasculature, stem and flowers.</text>
</comment>
<comment type="similarity">
    <text evidence="4">Belongs to the major facilitator superfamily. Sugar transporter (TC 2.A.1.1) family.</text>
</comment>
<accession>Q94CI6</accession>
<feature type="chain" id="PRO_0000259868" description="Sugar transporter ERD6-like 18">
    <location>
        <begin position="1"/>
        <end position="478"/>
    </location>
</feature>
<feature type="transmembrane region" description="Helical; Name=1" evidence="2">
    <location>
        <begin position="31"/>
        <end position="51"/>
    </location>
</feature>
<feature type="transmembrane region" description="Helical; Name=2" evidence="2">
    <location>
        <begin position="71"/>
        <end position="91"/>
    </location>
</feature>
<feature type="transmembrane region" description="Helical; Name=3" evidence="2">
    <location>
        <begin position="110"/>
        <end position="130"/>
    </location>
</feature>
<feature type="transmembrane region" description="Helical; Name=4" evidence="2">
    <location>
        <begin position="133"/>
        <end position="153"/>
    </location>
</feature>
<feature type="transmembrane region" description="Helical; Name=5" evidence="2">
    <location>
        <begin position="162"/>
        <end position="180"/>
    </location>
</feature>
<feature type="transmembrane region" description="Helical; Name=6" evidence="2">
    <location>
        <begin position="188"/>
        <end position="208"/>
    </location>
</feature>
<feature type="transmembrane region" description="Helical; Name=7" evidence="2">
    <location>
        <begin position="270"/>
        <end position="290"/>
    </location>
</feature>
<feature type="transmembrane region" description="Helical; Name=8" evidence="2">
    <location>
        <begin position="306"/>
        <end position="326"/>
    </location>
</feature>
<feature type="transmembrane region" description="Helical; Name=9" evidence="2">
    <location>
        <begin position="333"/>
        <end position="353"/>
    </location>
</feature>
<feature type="transmembrane region" description="Helical; Name=10" evidence="2">
    <location>
        <begin position="367"/>
        <end position="387"/>
    </location>
</feature>
<feature type="transmembrane region" description="Helical; Name=11" evidence="2">
    <location>
        <begin position="407"/>
        <end position="427"/>
    </location>
</feature>
<feature type="transmembrane region" description="Helical; Name=12" evidence="2">
    <location>
        <begin position="433"/>
        <end position="453"/>
    </location>
</feature>
<gene>
    <name type="primary">SFP2</name>
    <name type="ordered locus">At5g27360</name>
    <name type="ORF">F21A20.70</name>
</gene>
<protein>
    <recommendedName>
        <fullName>Sugar transporter ERD6-like 18</fullName>
    </recommendedName>
    <alternativeName>
        <fullName>Sugar-porter family protein 2</fullName>
    </alternativeName>
</protein>
<organism>
    <name type="scientific">Arabidopsis thaliana</name>
    <name type="common">Mouse-ear cress</name>
    <dbReference type="NCBI Taxonomy" id="3702"/>
    <lineage>
        <taxon>Eukaryota</taxon>
        <taxon>Viridiplantae</taxon>
        <taxon>Streptophyta</taxon>
        <taxon>Embryophyta</taxon>
        <taxon>Tracheophyta</taxon>
        <taxon>Spermatophyta</taxon>
        <taxon>Magnoliopsida</taxon>
        <taxon>eudicotyledons</taxon>
        <taxon>Gunneridae</taxon>
        <taxon>Pentapetalae</taxon>
        <taxon>rosids</taxon>
        <taxon>malvids</taxon>
        <taxon>Brassicales</taxon>
        <taxon>Brassicaceae</taxon>
        <taxon>Camelineae</taxon>
        <taxon>Arabidopsis</taxon>
    </lineage>
</organism>